<accession>Q9LV93</accession>
<accession>Q93ZN6</accession>
<evidence type="ECO:0000255" key="1">
    <source>
        <dbReference type="PROSITE-ProRule" id="PRU00434"/>
    </source>
</evidence>
<evidence type="ECO:0000256" key="2">
    <source>
        <dbReference type="SAM" id="MobiDB-lite"/>
    </source>
</evidence>
<evidence type="ECO:0000305" key="3"/>
<protein>
    <recommendedName>
        <fullName>ABC transporter F family member 5</fullName>
        <shortName>ABC transporter ABCF.5</shortName>
        <shortName>AtABCF5</shortName>
    </recommendedName>
    <alternativeName>
        <fullName>GCN20-type ATP-binding cassette protein GCN5</fullName>
    </alternativeName>
</protein>
<comment type="similarity">
    <text evidence="3">Belongs to the ABC transporter superfamily. ABCF family. EF3 (TC 3.A.1.121) subfamily.</text>
</comment>
<organism>
    <name type="scientific">Arabidopsis thaliana</name>
    <name type="common">Mouse-ear cress</name>
    <dbReference type="NCBI Taxonomy" id="3702"/>
    <lineage>
        <taxon>Eukaryota</taxon>
        <taxon>Viridiplantae</taxon>
        <taxon>Streptophyta</taxon>
        <taxon>Embryophyta</taxon>
        <taxon>Tracheophyta</taxon>
        <taxon>Spermatophyta</taxon>
        <taxon>Magnoliopsida</taxon>
        <taxon>eudicotyledons</taxon>
        <taxon>Gunneridae</taxon>
        <taxon>Pentapetalae</taxon>
        <taxon>rosids</taxon>
        <taxon>malvids</taxon>
        <taxon>Brassicales</taxon>
        <taxon>Brassicaceae</taxon>
        <taxon>Camelineae</taxon>
        <taxon>Arabidopsis</taxon>
    </lineage>
</organism>
<feature type="chain" id="PRO_0000379142" description="ABC transporter F family member 5">
    <location>
        <begin position="1"/>
        <end position="692"/>
    </location>
</feature>
<feature type="domain" description="ABC transporter 1" evidence="1">
    <location>
        <begin position="98"/>
        <end position="356"/>
    </location>
</feature>
<feature type="domain" description="ABC transporter 2" evidence="1">
    <location>
        <begin position="425"/>
        <end position="640"/>
    </location>
</feature>
<feature type="region of interest" description="Disordered" evidence="2">
    <location>
        <begin position="64"/>
        <end position="95"/>
    </location>
</feature>
<feature type="region of interest" description="Disordered" evidence="2">
    <location>
        <begin position="644"/>
        <end position="692"/>
    </location>
</feature>
<feature type="compositionally biased region" description="Polar residues" evidence="2">
    <location>
        <begin position="86"/>
        <end position="95"/>
    </location>
</feature>
<feature type="compositionally biased region" description="Basic residues" evidence="2">
    <location>
        <begin position="680"/>
        <end position="692"/>
    </location>
</feature>
<feature type="binding site" evidence="1">
    <location>
        <begin position="130"/>
        <end position="137"/>
    </location>
    <ligand>
        <name>ATP</name>
        <dbReference type="ChEBI" id="CHEBI:30616"/>
    </ligand>
</feature>
<feature type="binding site" evidence="1">
    <location>
        <begin position="457"/>
        <end position="464"/>
    </location>
    <ligand>
        <name>ATP</name>
        <dbReference type="ChEBI" id="CHEBI:30616"/>
    </ligand>
</feature>
<feature type="sequence conflict" description="In Ref. 3; AAN18079/AAL08291." evidence="3" ref="3">
    <original>R</original>
    <variation>Q</variation>
    <location>
        <position position="82"/>
    </location>
</feature>
<proteinExistence type="evidence at transcript level"/>
<sequence length="692" mass="78001">MGLSTNLHSLDLRSTFFTGLRTSPIPSNFIKISSISNPRRDISTIRAQVSTISLETSVKQRQDEIESLFSKQPSQQDSDRKRNGKSSKNGASGISSGVKLENIRKSYKGVTVLKDVTWEVKRGEKVGLVGVNGAGKTTQLRIITGQEEPDSGNVIKAKPNMKVAFLSQEFEVSMSKTVREEFMTAFKEEMEITEKLEKVQKAIEGSVDDLDLMGRLLDEFDLLQRRAQAVNLDSVDAKISKLMPELGFAPEDADRLVASFSGGWQMRMSLGKILLQDPDLLLLDEPTNHLDLDTIEWLEGYLQKQDVPMVIISHDRAFLDQLCTKIVETEMGVSRTFEGNYSQYVISKAEWIETQNAAWEKQQKDIDSTKDLIARLGAGANSGRASTAEKKLEKLQEQELIEKPFQRKQMKIRFPERGTSGRSVVNVKNIDFGFEDKMLFKKANLSIERGEKIAILGPNGCGKSTLLKLIMGLEKPVKGEVILGEHNVLPNYFEQNQAEVLDLDKTVLETVCEAAEDWRSDDIKGLLGRCNFKADMLDRKVSLLSGGEKARLAFCKFMVTPSTLLVLDEPTNHLDIPSKEMLEEAINEYQGTVIAVSHDRYFIKQIVNRVIEVEDGCLEDYAGDYNYYLEKNLDARTKELEREAELEEKAPKVKAKSKMSKAEKEARKKQKMQAFQQAKQKSKASKNSKRWN</sequence>
<name>AB5F_ARATH</name>
<reference key="1">
    <citation type="journal article" date="2000" name="DNA Res.">
        <title>Structural analysis of Arabidopsis thaliana chromosome 5. X. Sequence features of the regions of 3,076,755 bp covered by sixty P1 and TAC clones.</title>
        <authorList>
            <person name="Sato S."/>
            <person name="Nakamura Y."/>
            <person name="Kaneko T."/>
            <person name="Katoh T."/>
            <person name="Asamizu E."/>
            <person name="Kotani H."/>
            <person name="Tabata S."/>
        </authorList>
    </citation>
    <scope>NUCLEOTIDE SEQUENCE [LARGE SCALE GENOMIC DNA]</scope>
    <source>
        <strain>cv. Columbia</strain>
    </source>
</reference>
<reference key="2">
    <citation type="journal article" date="2017" name="Plant J.">
        <title>Araport11: a complete reannotation of the Arabidopsis thaliana reference genome.</title>
        <authorList>
            <person name="Cheng C.Y."/>
            <person name="Krishnakumar V."/>
            <person name="Chan A.P."/>
            <person name="Thibaud-Nissen F."/>
            <person name="Schobel S."/>
            <person name="Town C.D."/>
        </authorList>
    </citation>
    <scope>GENOME REANNOTATION</scope>
    <source>
        <strain>cv. Columbia</strain>
    </source>
</reference>
<reference key="3">
    <citation type="journal article" date="2003" name="Science">
        <title>Empirical analysis of transcriptional activity in the Arabidopsis genome.</title>
        <authorList>
            <person name="Yamada K."/>
            <person name="Lim J."/>
            <person name="Dale J.M."/>
            <person name="Chen H."/>
            <person name="Shinn P."/>
            <person name="Palm C.J."/>
            <person name="Southwick A.M."/>
            <person name="Wu H.C."/>
            <person name="Kim C.J."/>
            <person name="Nguyen M."/>
            <person name="Pham P.K."/>
            <person name="Cheuk R.F."/>
            <person name="Karlin-Newmann G."/>
            <person name="Liu S.X."/>
            <person name="Lam B."/>
            <person name="Sakano H."/>
            <person name="Wu T."/>
            <person name="Yu G."/>
            <person name="Miranda M."/>
            <person name="Quach H.L."/>
            <person name="Tripp M."/>
            <person name="Chang C.H."/>
            <person name="Lee J.M."/>
            <person name="Toriumi M.J."/>
            <person name="Chan M.M."/>
            <person name="Tang C.C."/>
            <person name="Onodera C.S."/>
            <person name="Deng J.M."/>
            <person name="Akiyama K."/>
            <person name="Ansari Y."/>
            <person name="Arakawa T."/>
            <person name="Banh J."/>
            <person name="Banno F."/>
            <person name="Bowser L."/>
            <person name="Brooks S.Y."/>
            <person name="Carninci P."/>
            <person name="Chao Q."/>
            <person name="Choy N."/>
            <person name="Enju A."/>
            <person name="Goldsmith A.D."/>
            <person name="Gurjal M."/>
            <person name="Hansen N.F."/>
            <person name="Hayashizaki Y."/>
            <person name="Johnson-Hopson C."/>
            <person name="Hsuan V.W."/>
            <person name="Iida K."/>
            <person name="Karnes M."/>
            <person name="Khan S."/>
            <person name="Koesema E."/>
            <person name="Ishida J."/>
            <person name="Jiang P.X."/>
            <person name="Jones T."/>
            <person name="Kawai J."/>
            <person name="Kamiya A."/>
            <person name="Meyers C."/>
            <person name="Nakajima M."/>
            <person name="Narusaka M."/>
            <person name="Seki M."/>
            <person name="Sakurai T."/>
            <person name="Satou M."/>
            <person name="Tamse R."/>
            <person name="Vaysberg M."/>
            <person name="Wallender E.K."/>
            <person name="Wong C."/>
            <person name="Yamamura Y."/>
            <person name="Yuan S."/>
            <person name="Shinozaki K."/>
            <person name="Davis R.W."/>
            <person name="Theologis A."/>
            <person name="Ecker J.R."/>
        </authorList>
    </citation>
    <scope>NUCLEOTIDE SEQUENCE [LARGE SCALE MRNA]</scope>
    <source>
        <strain>cv. Columbia</strain>
    </source>
</reference>
<reference key="4">
    <citation type="submission" date="2006-07" db="EMBL/GenBank/DDBJ databases">
        <title>Large-scale analysis of RIKEN Arabidopsis full-length (RAFL) cDNAs.</title>
        <authorList>
            <person name="Totoki Y."/>
            <person name="Seki M."/>
            <person name="Ishida J."/>
            <person name="Nakajima M."/>
            <person name="Enju A."/>
            <person name="Kamiya A."/>
            <person name="Narusaka M."/>
            <person name="Shin-i T."/>
            <person name="Nakagawa M."/>
            <person name="Sakamoto N."/>
            <person name="Oishi K."/>
            <person name="Kohara Y."/>
            <person name="Kobayashi M."/>
            <person name="Toyoda A."/>
            <person name="Sakaki Y."/>
            <person name="Sakurai T."/>
            <person name="Iida K."/>
            <person name="Akiyama K."/>
            <person name="Satou M."/>
            <person name="Toyoda T."/>
            <person name="Konagaya A."/>
            <person name="Carninci P."/>
            <person name="Kawai J."/>
            <person name="Hayashizaki Y."/>
            <person name="Shinozaki K."/>
        </authorList>
    </citation>
    <scope>NUCLEOTIDE SEQUENCE [LARGE SCALE MRNA]</scope>
    <source>
        <strain>cv. Columbia</strain>
    </source>
</reference>
<reference key="5">
    <citation type="journal article" date="2001" name="J. Biol. Chem.">
        <title>The Arabidopsis thaliana ABC protein superfamily, a complete inventory.</title>
        <authorList>
            <person name="Sanchez-Fernandez R."/>
            <person name="Davies T.G."/>
            <person name="Coleman J.O."/>
            <person name="Rea P.A."/>
        </authorList>
    </citation>
    <scope>GENE FAMILY</scope>
    <scope>NOMENCLATURE</scope>
</reference>
<reference key="6">
    <citation type="journal article" date="2002" name="Planta">
        <title>Multifunctionality of plant ABC transporters -- more than just detoxifiers.</title>
        <authorList>
            <person name="Martinoia E."/>
            <person name="Klein M."/>
            <person name="Geisler M."/>
            <person name="Bovet L."/>
            <person name="Forestier C."/>
            <person name="Kolukisaoglu H.U."/>
            <person name="Mueller-Roeber B."/>
            <person name="Schulz B."/>
        </authorList>
    </citation>
    <scope>GENE FAMILY</scope>
</reference>
<reference key="7">
    <citation type="journal article" date="2008" name="Trends Plant Sci.">
        <title>Plant ABC proteins - a unified nomenclature and updated inventory.</title>
        <authorList>
            <person name="Verrier P.J."/>
            <person name="Bird D."/>
            <person name="Burla B."/>
            <person name="Dassa E."/>
            <person name="Forestier C."/>
            <person name="Geisler M."/>
            <person name="Klein M."/>
            <person name="Kolukisaoglu H.U."/>
            <person name="Lee Y."/>
            <person name="Martinoia E."/>
            <person name="Murphy A."/>
            <person name="Rea P.A."/>
            <person name="Samuels L."/>
            <person name="Schulz B."/>
            <person name="Spalding E.J."/>
            <person name="Yazaki K."/>
            <person name="Theodoulou F.L."/>
        </authorList>
    </citation>
    <scope>GENE FAMILY</scope>
    <scope>NOMENCLATURE</scope>
</reference>
<keyword id="KW-0067">ATP-binding</keyword>
<keyword id="KW-0547">Nucleotide-binding</keyword>
<keyword id="KW-1185">Reference proteome</keyword>
<keyword id="KW-0677">Repeat</keyword>
<keyword id="KW-0813">Transport</keyword>
<gene>
    <name type="primary">ABCF5</name>
    <name type="synonym">GCN5</name>
    <name type="ordered locus">At5g64840</name>
    <name type="ORF">MXK3.6</name>
</gene>
<dbReference type="EMBL" id="AB019236">
    <property type="protein sequence ID" value="BAA97296.1"/>
    <property type="molecule type" value="Genomic_DNA"/>
</dbReference>
<dbReference type="EMBL" id="CP002688">
    <property type="protein sequence ID" value="AED97960.1"/>
    <property type="molecule type" value="Genomic_DNA"/>
</dbReference>
<dbReference type="EMBL" id="AY056435">
    <property type="protein sequence ID" value="AAL08291.1"/>
    <property type="molecule type" value="mRNA"/>
</dbReference>
<dbReference type="EMBL" id="BT000510">
    <property type="protein sequence ID" value="AAN18079.1"/>
    <property type="molecule type" value="mRNA"/>
</dbReference>
<dbReference type="EMBL" id="AK227200">
    <property type="protein sequence ID" value="BAE99239.1"/>
    <property type="molecule type" value="mRNA"/>
</dbReference>
<dbReference type="RefSeq" id="NP_201289.1">
    <property type="nucleotide sequence ID" value="NM_125882.3"/>
</dbReference>
<dbReference type="SMR" id="Q9LV93"/>
<dbReference type="BioGRID" id="21849">
    <property type="interactions" value="1"/>
</dbReference>
<dbReference type="FunCoup" id="Q9LV93">
    <property type="interactions" value="204"/>
</dbReference>
<dbReference type="STRING" id="3702.Q9LV93"/>
<dbReference type="iPTMnet" id="Q9LV93"/>
<dbReference type="PaxDb" id="3702-AT5G64840.1"/>
<dbReference type="ProteomicsDB" id="244556"/>
<dbReference type="EnsemblPlants" id="AT5G64840.1">
    <property type="protein sequence ID" value="AT5G64840.1"/>
    <property type="gene ID" value="AT5G64840"/>
</dbReference>
<dbReference type="GeneID" id="836607"/>
<dbReference type="Gramene" id="AT5G64840.1">
    <property type="protein sequence ID" value="AT5G64840.1"/>
    <property type="gene ID" value="AT5G64840"/>
</dbReference>
<dbReference type="KEGG" id="ath:AT5G64840"/>
<dbReference type="Araport" id="AT5G64840"/>
<dbReference type="TAIR" id="AT5G64840">
    <property type="gene designation" value="ABCF5"/>
</dbReference>
<dbReference type="eggNOG" id="KOG0927">
    <property type="taxonomic scope" value="Eukaryota"/>
</dbReference>
<dbReference type="HOGENOM" id="CLU_000604_36_0_1"/>
<dbReference type="InParanoid" id="Q9LV93"/>
<dbReference type="OMA" id="GQQARFQ"/>
<dbReference type="OrthoDB" id="2110130at2759"/>
<dbReference type="PhylomeDB" id="Q9LV93"/>
<dbReference type="PRO" id="PR:Q9LV93"/>
<dbReference type="Proteomes" id="UP000006548">
    <property type="component" value="Chromosome 5"/>
</dbReference>
<dbReference type="ExpressionAtlas" id="Q9LV93">
    <property type="expression patterns" value="baseline and differential"/>
</dbReference>
<dbReference type="GO" id="GO:0005524">
    <property type="term" value="F:ATP binding"/>
    <property type="evidence" value="ECO:0007669"/>
    <property type="project" value="UniProtKB-KW"/>
</dbReference>
<dbReference type="GO" id="GO:0016887">
    <property type="term" value="F:ATP hydrolysis activity"/>
    <property type="evidence" value="ECO:0007669"/>
    <property type="project" value="InterPro"/>
</dbReference>
<dbReference type="GO" id="GO:0003729">
    <property type="term" value="F:mRNA binding"/>
    <property type="evidence" value="ECO:0000314"/>
    <property type="project" value="TAIR"/>
</dbReference>
<dbReference type="GO" id="GO:0009624">
    <property type="term" value="P:response to nematode"/>
    <property type="evidence" value="ECO:0007007"/>
    <property type="project" value="TAIR"/>
</dbReference>
<dbReference type="CDD" id="cd03221">
    <property type="entry name" value="ABCF_EF-3"/>
    <property type="match status" value="2"/>
</dbReference>
<dbReference type="FunFam" id="3.40.50.300:FF:000309">
    <property type="entry name" value="ABC transporter ATP-binding protein"/>
    <property type="match status" value="1"/>
</dbReference>
<dbReference type="FunFam" id="3.40.50.300:FF:000011">
    <property type="entry name" value="Putative ABC transporter ATP-binding component"/>
    <property type="match status" value="1"/>
</dbReference>
<dbReference type="Gene3D" id="3.40.50.300">
    <property type="entry name" value="P-loop containing nucleotide triphosphate hydrolases"/>
    <property type="match status" value="2"/>
</dbReference>
<dbReference type="InterPro" id="IPR003593">
    <property type="entry name" value="AAA+_ATPase"/>
</dbReference>
<dbReference type="InterPro" id="IPR032781">
    <property type="entry name" value="ABC_tran_Xtn"/>
</dbReference>
<dbReference type="InterPro" id="IPR003439">
    <property type="entry name" value="ABC_transporter-like_ATP-bd"/>
</dbReference>
<dbReference type="InterPro" id="IPR017871">
    <property type="entry name" value="ABC_transporter-like_CS"/>
</dbReference>
<dbReference type="InterPro" id="IPR051309">
    <property type="entry name" value="ABCF_ATPase"/>
</dbReference>
<dbReference type="InterPro" id="IPR027417">
    <property type="entry name" value="P-loop_NTPase"/>
</dbReference>
<dbReference type="PANTHER" id="PTHR42855">
    <property type="entry name" value="ABC TRANSPORTER ATP-BINDING SUBUNIT"/>
    <property type="match status" value="1"/>
</dbReference>
<dbReference type="PANTHER" id="PTHR42855:SF1">
    <property type="entry name" value="ABC TRANSPORTER DOMAIN-CONTAINING PROTEIN"/>
    <property type="match status" value="1"/>
</dbReference>
<dbReference type="Pfam" id="PF00005">
    <property type="entry name" value="ABC_tran"/>
    <property type="match status" value="2"/>
</dbReference>
<dbReference type="Pfam" id="PF12848">
    <property type="entry name" value="ABC_tran_Xtn"/>
    <property type="match status" value="1"/>
</dbReference>
<dbReference type="SMART" id="SM00382">
    <property type="entry name" value="AAA"/>
    <property type="match status" value="2"/>
</dbReference>
<dbReference type="SUPFAM" id="SSF52540">
    <property type="entry name" value="P-loop containing nucleoside triphosphate hydrolases"/>
    <property type="match status" value="2"/>
</dbReference>
<dbReference type="PROSITE" id="PS00211">
    <property type="entry name" value="ABC_TRANSPORTER_1"/>
    <property type="match status" value="2"/>
</dbReference>
<dbReference type="PROSITE" id="PS50893">
    <property type="entry name" value="ABC_TRANSPORTER_2"/>
    <property type="match status" value="2"/>
</dbReference>